<gene>
    <name type="primary">trpE</name>
    <name type="ordered locus">slr0738</name>
</gene>
<dbReference type="EC" id="4.1.3.27"/>
<dbReference type="EMBL" id="BA000022">
    <property type="protein sequence ID" value="BAA16689.1"/>
    <property type="molecule type" value="Genomic_DNA"/>
</dbReference>
<dbReference type="EMBL" id="J04195">
    <property type="protein sequence ID" value="AAA88626.1"/>
    <property type="status" value="ALT_FRAME"/>
    <property type="molecule type" value="Genomic_DNA"/>
</dbReference>
<dbReference type="EMBL" id="J04195">
    <property type="protein sequence ID" value="AAA88627.1"/>
    <property type="status" value="ALT_FRAME"/>
    <property type="molecule type" value="Genomic_DNA"/>
</dbReference>
<dbReference type="PIR" id="S74537">
    <property type="entry name" value="S74537"/>
</dbReference>
<dbReference type="SMR" id="P20170"/>
<dbReference type="IntAct" id="P20170">
    <property type="interactions" value="1"/>
</dbReference>
<dbReference type="STRING" id="1148.gene:10497544"/>
<dbReference type="PaxDb" id="1148-1651761"/>
<dbReference type="EnsemblBacteria" id="BAA16689">
    <property type="protein sequence ID" value="BAA16689"/>
    <property type="gene ID" value="BAA16689"/>
</dbReference>
<dbReference type="KEGG" id="syn:slr0738"/>
<dbReference type="eggNOG" id="COG0147">
    <property type="taxonomic scope" value="Bacteria"/>
</dbReference>
<dbReference type="InParanoid" id="P20170"/>
<dbReference type="PhylomeDB" id="P20170"/>
<dbReference type="UniPathway" id="UPA00035">
    <property type="reaction ID" value="UER00040"/>
</dbReference>
<dbReference type="Proteomes" id="UP000001425">
    <property type="component" value="Chromosome"/>
</dbReference>
<dbReference type="GO" id="GO:0004049">
    <property type="term" value="F:anthranilate synthase activity"/>
    <property type="evidence" value="ECO:0007669"/>
    <property type="project" value="UniProtKB-EC"/>
</dbReference>
<dbReference type="GO" id="GO:0046872">
    <property type="term" value="F:metal ion binding"/>
    <property type="evidence" value="ECO:0007669"/>
    <property type="project" value="UniProtKB-KW"/>
</dbReference>
<dbReference type="GO" id="GO:0000162">
    <property type="term" value="P:L-tryptophan biosynthetic process"/>
    <property type="evidence" value="ECO:0007669"/>
    <property type="project" value="UniProtKB-UniPathway"/>
</dbReference>
<dbReference type="Gene3D" id="3.60.120.10">
    <property type="entry name" value="Anthranilate synthase"/>
    <property type="match status" value="1"/>
</dbReference>
<dbReference type="InterPro" id="IPR005801">
    <property type="entry name" value="ADC_synthase"/>
</dbReference>
<dbReference type="InterPro" id="IPR019999">
    <property type="entry name" value="Anth_synth_I-like"/>
</dbReference>
<dbReference type="InterPro" id="IPR006805">
    <property type="entry name" value="Anth_synth_I_N"/>
</dbReference>
<dbReference type="InterPro" id="IPR005256">
    <property type="entry name" value="Anth_synth_I_PabB"/>
</dbReference>
<dbReference type="InterPro" id="IPR015890">
    <property type="entry name" value="Chorismate_C"/>
</dbReference>
<dbReference type="NCBIfam" id="TIGR00564">
    <property type="entry name" value="trpE_most"/>
    <property type="match status" value="1"/>
</dbReference>
<dbReference type="PANTHER" id="PTHR42839">
    <property type="entry name" value="ISOCHORISMATE SYNTHASE ENTC"/>
    <property type="match status" value="1"/>
</dbReference>
<dbReference type="PANTHER" id="PTHR42839:SF2">
    <property type="entry name" value="ISOCHORISMATE SYNTHASE ENTC"/>
    <property type="match status" value="1"/>
</dbReference>
<dbReference type="Pfam" id="PF04715">
    <property type="entry name" value="Anth_synt_I_N"/>
    <property type="match status" value="1"/>
</dbReference>
<dbReference type="Pfam" id="PF00425">
    <property type="entry name" value="Chorismate_bind"/>
    <property type="match status" value="1"/>
</dbReference>
<dbReference type="PRINTS" id="PR00095">
    <property type="entry name" value="ANTSNTHASEI"/>
</dbReference>
<dbReference type="SUPFAM" id="SSF56322">
    <property type="entry name" value="ADC synthase"/>
    <property type="match status" value="1"/>
</dbReference>
<feature type="chain" id="PRO_0000154114" description="Anthranilate synthase component 1">
    <location>
        <begin position="1"/>
        <end position="508"/>
    </location>
</feature>
<feature type="binding site" evidence="2">
    <location>
        <position position="51"/>
    </location>
    <ligand>
        <name>L-tryptophan</name>
        <dbReference type="ChEBI" id="CHEBI:57912"/>
    </ligand>
</feature>
<feature type="binding site" evidence="2">
    <location>
        <begin position="283"/>
        <end position="285"/>
    </location>
    <ligand>
        <name>L-tryptophan</name>
        <dbReference type="ChEBI" id="CHEBI:57912"/>
    </ligand>
</feature>
<feature type="binding site" evidence="2">
    <location>
        <begin position="323"/>
        <end position="324"/>
    </location>
    <ligand>
        <name>chorismate</name>
        <dbReference type="ChEBI" id="CHEBI:29748"/>
    </ligand>
</feature>
<feature type="binding site" evidence="2">
    <location>
        <position position="350"/>
    </location>
    <ligand>
        <name>Mg(2+)</name>
        <dbReference type="ChEBI" id="CHEBI:18420"/>
    </ligand>
</feature>
<feature type="binding site" evidence="2">
    <location>
        <position position="438"/>
    </location>
    <ligand>
        <name>chorismate</name>
        <dbReference type="ChEBI" id="CHEBI:29748"/>
    </ligand>
</feature>
<feature type="binding site" evidence="2">
    <location>
        <position position="458"/>
    </location>
    <ligand>
        <name>chorismate</name>
        <dbReference type="ChEBI" id="CHEBI:29748"/>
    </ligand>
</feature>
<feature type="binding site" evidence="2">
    <location>
        <begin position="477"/>
        <end position="479"/>
    </location>
    <ligand>
        <name>chorismate</name>
        <dbReference type="ChEBI" id="CHEBI:29748"/>
    </ligand>
</feature>
<feature type="binding site" evidence="2">
    <location>
        <position position="479"/>
    </location>
    <ligand>
        <name>chorismate</name>
        <dbReference type="ChEBI" id="CHEBI:29748"/>
    </ligand>
</feature>
<feature type="binding site" evidence="2">
    <location>
        <position position="492"/>
    </location>
    <ligand>
        <name>Mg(2+)</name>
        <dbReference type="ChEBI" id="CHEBI:18420"/>
    </ligand>
</feature>
<protein>
    <recommendedName>
        <fullName>Anthranilate synthase component 1</fullName>
        <shortName>AS</shortName>
        <shortName>ASI</shortName>
        <ecNumber>4.1.3.27</ecNumber>
    </recommendedName>
</protein>
<keyword id="KW-0028">Amino-acid biosynthesis</keyword>
<keyword id="KW-0057">Aromatic amino acid biosynthesis</keyword>
<keyword id="KW-0456">Lyase</keyword>
<keyword id="KW-0460">Magnesium</keyword>
<keyword id="KW-0479">Metal-binding</keyword>
<keyword id="KW-1185">Reference proteome</keyword>
<keyword id="KW-0822">Tryptophan biosynthesis</keyword>
<sequence>MISPGFSHFTELAQQGNFIPVYQEWVADLETPVSAWYKVCSSQPYNFLLESVEGGESIGRYSFLGCDPMWVLEARGDETTQVLRNGQTETFRGNPLDILSQCLESIRPVNLPQLPPGIGGLFGVWGYELIRWMEPRVPVYEPQPEDPPDGIWMQVDHLLIFDQVKRKIWAIAFADLRGENVDLETAYRNACQRVTKLVLQLQLPLPPEATALELLTKTQLEGKELNYSSNTEQEKFLEEVAIAKDYITAGDIFQVVLSQRLSTIYRDDPFKLYRSLRLINPSPYMAYYNFGHWQIIGSSPEVMVKADRQLDGKLMATVRPIAGTRPRGKTHPEDEQLAEELLNDPKEIAEHVMLVDLGRNDLGRVCVQGSVKVNELMVIERYSHVMHIVSNVVGELASDKTAWDLLKACFPAGTVSGAPKIRAMEIINELEPERRGPYSGVYGYYDFEGQLNTAIAIRTMVVQEQPDGAHRVSVQTGAGIVADSDPQKEYEETLNKARGLLEAIRALS</sequence>
<organism>
    <name type="scientific">Synechocystis sp. (strain ATCC 27184 / PCC 6803 / Kazusa)</name>
    <dbReference type="NCBI Taxonomy" id="1111708"/>
    <lineage>
        <taxon>Bacteria</taxon>
        <taxon>Bacillati</taxon>
        <taxon>Cyanobacteriota</taxon>
        <taxon>Cyanophyceae</taxon>
        <taxon>Synechococcales</taxon>
        <taxon>Merismopediaceae</taxon>
        <taxon>Synechocystis</taxon>
    </lineage>
</organism>
<proteinExistence type="inferred from homology"/>
<evidence type="ECO:0000250" key="1"/>
<evidence type="ECO:0000250" key="2">
    <source>
        <dbReference type="UniProtKB" id="P00897"/>
    </source>
</evidence>
<evidence type="ECO:0000305" key="3"/>
<comment type="function">
    <text evidence="1">Part of a heterotetrameric complex that catalyzes the two-step biosynthesis of anthranilate, an intermediate in the biosynthesis of L-tryptophan. In the first step, the glutamine-binding beta subunit (TrpG) of anthranilate synthase (AS) provides the glutamine amidotransferase activity which generates ammonia as a substrate that, along with chorismate, is used in the second step, catalyzed by the large alpha subunit of AS (TrpE) to produce anthranilate. In the absence of TrpG, TrpE can synthesize anthranilate directly from chorismate and high concentrations of ammonia (By similarity).</text>
</comment>
<comment type="catalytic activity">
    <reaction>
        <text>chorismate + L-glutamine = anthranilate + pyruvate + L-glutamate + H(+)</text>
        <dbReference type="Rhea" id="RHEA:21732"/>
        <dbReference type="ChEBI" id="CHEBI:15361"/>
        <dbReference type="ChEBI" id="CHEBI:15378"/>
        <dbReference type="ChEBI" id="CHEBI:16567"/>
        <dbReference type="ChEBI" id="CHEBI:29748"/>
        <dbReference type="ChEBI" id="CHEBI:29985"/>
        <dbReference type="ChEBI" id="CHEBI:58359"/>
        <dbReference type="EC" id="4.1.3.27"/>
    </reaction>
</comment>
<comment type="cofactor">
    <cofactor evidence="2">
        <name>Mg(2+)</name>
        <dbReference type="ChEBI" id="CHEBI:18420"/>
    </cofactor>
    <text evidence="2">Binds 1 Mg(2+) ion per subunit.</text>
</comment>
<comment type="activity regulation">
    <text evidence="1">Feedback inhibited by tryptophan.</text>
</comment>
<comment type="pathway">
    <text>Amino-acid biosynthesis; L-tryptophan biosynthesis; L-tryptophan from chorismate: step 1/5.</text>
</comment>
<comment type="subunit">
    <text evidence="1">Heterotetramer consisting of two non-identical subunits: a beta subunit (TrpG) and a large alpha subunit (TrpE).</text>
</comment>
<comment type="similarity">
    <text evidence="3">Belongs to the anthranilate synthase component I family.</text>
</comment>
<comment type="sequence caution" evidence="3">
    <conflict type="frameshift">
        <sequence resource="EMBL-CDS" id="AAA88627"/>
    </conflict>
</comment>
<accession>P20170</accession>
<accession>P20168</accession>
<reference key="1">
    <citation type="journal article" date="1996" name="DNA Res.">
        <title>Sequence analysis of the genome of the unicellular cyanobacterium Synechocystis sp. strain PCC6803. II. Sequence determination of the entire genome and assignment of potential protein-coding regions.</title>
        <authorList>
            <person name="Kaneko T."/>
            <person name="Sato S."/>
            <person name="Kotani H."/>
            <person name="Tanaka A."/>
            <person name="Asamizu E."/>
            <person name="Nakamura Y."/>
            <person name="Miyajima N."/>
            <person name="Hirosawa M."/>
            <person name="Sugiura M."/>
            <person name="Sasamoto S."/>
            <person name="Kimura T."/>
            <person name="Hosouchi T."/>
            <person name="Matsuno A."/>
            <person name="Muraki A."/>
            <person name="Nakazaki N."/>
            <person name="Naruo K."/>
            <person name="Okumura S."/>
            <person name="Shimpo S."/>
            <person name="Takeuchi C."/>
            <person name="Wada T."/>
            <person name="Watanabe A."/>
            <person name="Yamada M."/>
            <person name="Yasuda M."/>
            <person name="Tabata S."/>
        </authorList>
    </citation>
    <scope>NUCLEOTIDE SEQUENCE [LARGE SCALE GENOMIC DNA]</scope>
    <source>
        <strain>ATCC 27184 / PCC 6803 / Kazusa</strain>
    </source>
</reference>
<reference key="2">
    <citation type="journal article" date="1988" name="J. Biol. Chem.">
        <title>Molecular cloning and sequencing of the psaD gene encoding subunit II of photosystem I from the cyanobacterium, Synechocystis sp. PCC 6803.</title>
        <authorList>
            <person name="Reilly P."/>
            <person name="Hulmes J.D."/>
            <person name="Pan Y.-C.E."/>
            <person name="Nelson N."/>
        </authorList>
    </citation>
    <scope>NUCLEOTIDE SEQUENCE [GENOMIC DNA] OF 1-408</scope>
</reference>
<name>TRPE_SYNY3</name>